<feature type="chain" id="PRO_0000105972" description="Peroxisomal membrane protein PMP30A">
    <location>
        <begin position="1"/>
        <end position="256"/>
    </location>
</feature>
<keyword id="KW-0903">Direct protein sequencing</keyword>
<keyword id="KW-0472">Membrane</keyword>
<keyword id="KW-0576">Peroxisome</keyword>
<keyword id="KW-0962">Peroxisome biogenesis</keyword>
<reference key="1">
    <citation type="journal article" date="1994" name="Yeast">
        <title>The peroxisomal membrane proteins of Candida boidinii: gene isolation and expression.</title>
        <authorList>
            <person name="Moreno M."/>
            <person name="Lark R."/>
            <person name="Campbell K.L."/>
            <person name="Goodman J.M."/>
        </authorList>
    </citation>
    <scope>NUCLEOTIDE SEQUENCE [GENOMIC DNA]</scope>
    <scope>PARTIAL PROTEIN SEQUENCE</scope>
    <source>
        <strain>ATCC 32195</strain>
    </source>
</reference>
<proteinExistence type="evidence at protein level"/>
<organism>
    <name type="scientific">Candida boidinii</name>
    <name type="common">Yeast</name>
    <dbReference type="NCBI Taxonomy" id="5477"/>
    <lineage>
        <taxon>Eukaryota</taxon>
        <taxon>Fungi</taxon>
        <taxon>Dikarya</taxon>
        <taxon>Ascomycota</taxon>
        <taxon>Saccharomycotina</taxon>
        <taxon>Pichiomycetes</taxon>
        <taxon>Pichiales</taxon>
        <taxon>Pichiaceae</taxon>
        <taxon>Ogataea</taxon>
        <taxon>Ogataea/Candida clade</taxon>
    </lineage>
</organism>
<protein>
    <recommendedName>
        <fullName>Peroxisomal membrane protein PMP30A</fullName>
    </recommendedName>
    <alternativeName>
        <fullName>Peroxin-11A</fullName>
    </alternativeName>
    <alternativeName>
        <fullName>Peroxisomal membrane protein PMP31</fullName>
    </alternativeName>
</protein>
<accession>Q00316</accession>
<evidence type="ECO:0000305" key="1"/>
<comment type="function">
    <text>Involved in peroxisomal proliferation. Could participate in peroxisomal elongation or fission. May be involved in parceling of peroxisomes into regular quanta.</text>
</comment>
<comment type="subcellular location">
    <subcellularLocation>
        <location>Peroxisome membrane</location>
        <topology>Peripheral membrane protein</topology>
    </subcellularLocation>
</comment>
<comment type="similarity">
    <text evidence="1">Belongs to the peroxin-11 family.</text>
</comment>
<gene>
    <name type="primary">PEX11A</name>
    <name type="synonym">PMP30A</name>
    <name type="synonym">PMP31</name>
</gene>
<dbReference type="EMBL" id="L27999">
    <property type="protein sequence ID" value="AAA66346.1"/>
    <property type="molecule type" value="Genomic_DNA"/>
</dbReference>
<dbReference type="PIR" id="S50280">
    <property type="entry name" value="S50280"/>
</dbReference>
<dbReference type="GO" id="GO:0005778">
    <property type="term" value="C:peroxisomal membrane"/>
    <property type="evidence" value="ECO:0000250"/>
    <property type="project" value="UniProtKB"/>
</dbReference>
<dbReference type="GO" id="GO:0016559">
    <property type="term" value="P:peroxisome fission"/>
    <property type="evidence" value="ECO:0007669"/>
    <property type="project" value="InterPro"/>
</dbReference>
<dbReference type="GO" id="GO:0007031">
    <property type="term" value="P:peroxisome organization"/>
    <property type="evidence" value="ECO:0000250"/>
    <property type="project" value="UniProtKB"/>
</dbReference>
<dbReference type="GO" id="GO:0007165">
    <property type="term" value="P:signal transduction"/>
    <property type="evidence" value="ECO:0000250"/>
    <property type="project" value="UniProtKB"/>
</dbReference>
<dbReference type="InterPro" id="IPR008733">
    <property type="entry name" value="PEX11"/>
</dbReference>
<dbReference type="PANTHER" id="PTHR12652:SF50">
    <property type="entry name" value="PEROXIN 11"/>
    <property type="match status" value="1"/>
</dbReference>
<dbReference type="PANTHER" id="PTHR12652">
    <property type="entry name" value="PEROXISOMAL BIOGENESIS FACTOR 11"/>
    <property type="match status" value="1"/>
</dbReference>
<dbReference type="Pfam" id="PF05648">
    <property type="entry name" value="PEX11"/>
    <property type="match status" value="1"/>
</dbReference>
<name>PX11A_CANBO</name>
<sequence>MVYGELIYHPVVTKLLKFLDSSASREKLLRLLQYLCRFLTYYTFRRNINIETIQLIKKIQSSIAISRKPLRFLKNLPHLKNLNKIYSNELLDSTIRIGDLIKNFGYALYFQFDTLQWLKLLGLLTSKNSGALYFKVDKLAANFWLIGLTGSIITDLRNLKISYDSNKALLNEINSQEKTDGSITSDEKLIVQNNELILKNNEKINLNKRDLFKNVLDSLIALKGSQLIDLNDGVLGFAGIITSIIGIEDIWNATKA</sequence>